<comment type="function">
    <text evidence="1">Quinone reductase that provides resistance to thiol-specific stress caused by electrophilic quinones.</text>
</comment>
<comment type="function">
    <text evidence="1">Also exhibits azoreductase activity. Catalyzes the reductive cleavage of the azo bond in aromatic azo compounds to the corresponding amines.</text>
</comment>
<comment type="catalytic activity">
    <reaction evidence="1">
        <text>2 a quinone + NADH + H(+) = 2 a 1,4-benzosemiquinone + NAD(+)</text>
        <dbReference type="Rhea" id="RHEA:65952"/>
        <dbReference type="ChEBI" id="CHEBI:15378"/>
        <dbReference type="ChEBI" id="CHEBI:57540"/>
        <dbReference type="ChEBI" id="CHEBI:57945"/>
        <dbReference type="ChEBI" id="CHEBI:132124"/>
        <dbReference type="ChEBI" id="CHEBI:134225"/>
    </reaction>
</comment>
<comment type="catalytic activity">
    <reaction evidence="1">
        <text>N,N-dimethyl-1,4-phenylenediamine + anthranilate + 2 NAD(+) = 2-(4-dimethylaminophenyl)diazenylbenzoate + 2 NADH + 2 H(+)</text>
        <dbReference type="Rhea" id="RHEA:55872"/>
        <dbReference type="ChEBI" id="CHEBI:15378"/>
        <dbReference type="ChEBI" id="CHEBI:15783"/>
        <dbReference type="ChEBI" id="CHEBI:16567"/>
        <dbReference type="ChEBI" id="CHEBI:57540"/>
        <dbReference type="ChEBI" id="CHEBI:57945"/>
        <dbReference type="ChEBI" id="CHEBI:71579"/>
        <dbReference type="EC" id="1.7.1.17"/>
    </reaction>
</comment>
<comment type="cofactor">
    <cofactor evidence="1">
        <name>FMN</name>
        <dbReference type="ChEBI" id="CHEBI:58210"/>
    </cofactor>
    <text evidence="1">Binds 1 FMN per subunit.</text>
</comment>
<comment type="subunit">
    <text evidence="1">Homodimer.</text>
</comment>
<comment type="similarity">
    <text evidence="1">Belongs to the azoreductase type 1 family.</text>
</comment>
<organism>
    <name type="scientific">Pseudomonas fluorescens (strain ATCC BAA-477 / NRRL B-23932 / Pf-5)</name>
    <dbReference type="NCBI Taxonomy" id="220664"/>
    <lineage>
        <taxon>Bacteria</taxon>
        <taxon>Pseudomonadati</taxon>
        <taxon>Pseudomonadota</taxon>
        <taxon>Gammaproteobacteria</taxon>
        <taxon>Pseudomonadales</taxon>
        <taxon>Pseudomonadaceae</taxon>
        <taxon>Pseudomonas</taxon>
    </lineage>
</organism>
<gene>
    <name evidence="1" type="primary">azoR2</name>
    <name type="ordered locus">PFL_1546</name>
</gene>
<protein>
    <recommendedName>
        <fullName evidence="1">FMN-dependent NADH:quinone oxidoreductase 2</fullName>
        <ecNumber evidence="1">1.6.5.-</ecNumber>
    </recommendedName>
    <alternativeName>
        <fullName evidence="1">Azo-dye reductase 2</fullName>
    </alternativeName>
    <alternativeName>
        <fullName evidence="1">FMN-dependent NADH-azo compound oxidoreductase 2</fullName>
    </alternativeName>
    <alternativeName>
        <fullName evidence="1">FMN-dependent NADH-azoreductase 2</fullName>
        <ecNumber evidence="1">1.7.1.17</ecNumber>
    </alternativeName>
</protein>
<proteinExistence type="inferred from homology"/>
<evidence type="ECO:0000255" key="1">
    <source>
        <dbReference type="HAMAP-Rule" id="MF_01216"/>
    </source>
</evidence>
<keyword id="KW-0285">Flavoprotein</keyword>
<keyword id="KW-0288">FMN</keyword>
<keyword id="KW-0520">NAD</keyword>
<keyword id="KW-0560">Oxidoreductase</keyword>
<sequence>MSRVLIIESSARQQDSVSRQLTQTFIQQWQAAHPGDSITVRDLARNPVPHLDANLLGGWMKPAEQRSAAEQDSLQRSNELTEELLAADVLVMAAPMYNFAIPSTLKAWLDHVLRAGVTFKYTDTGPQGLLTGKRAYVLTARGGIYAGSTADHQEPYLRQVMGFIGIHDVEFIHAEGLNLGGDFHEKGLNQANAKLAQVA</sequence>
<accession>Q4KGG0</accession>
<reference key="1">
    <citation type="journal article" date="2005" name="Nat. Biotechnol.">
        <title>Complete genome sequence of the plant commensal Pseudomonas fluorescens Pf-5.</title>
        <authorList>
            <person name="Paulsen I.T."/>
            <person name="Press C.M."/>
            <person name="Ravel J."/>
            <person name="Kobayashi D.Y."/>
            <person name="Myers G.S.A."/>
            <person name="Mavrodi D.V."/>
            <person name="DeBoy R.T."/>
            <person name="Seshadri R."/>
            <person name="Ren Q."/>
            <person name="Madupu R."/>
            <person name="Dodson R.J."/>
            <person name="Durkin A.S."/>
            <person name="Brinkac L.M."/>
            <person name="Daugherty S.C."/>
            <person name="Sullivan S.A."/>
            <person name="Rosovitz M.J."/>
            <person name="Gwinn M.L."/>
            <person name="Zhou L."/>
            <person name="Schneider D.J."/>
            <person name="Cartinhour S.W."/>
            <person name="Nelson W.C."/>
            <person name="Weidman J."/>
            <person name="Watkins K."/>
            <person name="Tran K."/>
            <person name="Khouri H."/>
            <person name="Pierson E.A."/>
            <person name="Pierson L.S. III"/>
            <person name="Thomashow L.S."/>
            <person name="Loper J.E."/>
        </authorList>
    </citation>
    <scope>NUCLEOTIDE SEQUENCE [LARGE SCALE GENOMIC DNA]</scope>
    <source>
        <strain>ATCC BAA-477 / NRRL B-23932 / Pf-5</strain>
    </source>
</reference>
<feature type="chain" id="PRO_0000245945" description="FMN-dependent NADH:quinone oxidoreductase 2">
    <location>
        <begin position="1"/>
        <end position="199"/>
    </location>
</feature>
<feature type="binding site" evidence="1">
    <location>
        <position position="10"/>
    </location>
    <ligand>
        <name>FMN</name>
        <dbReference type="ChEBI" id="CHEBI:58210"/>
    </ligand>
</feature>
<feature type="binding site" evidence="1">
    <location>
        <begin position="16"/>
        <end position="18"/>
    </location>
    <ligand>
        <name>FMN</name>
        <dbReference type="ChEBI" id="CHEBI:58210"/>
    </ligand>
</feature>
<feature type="binding site" evidence="1">
    <location>
        <begin position="96"/>
        <end position="99"/>
    </location>
    <ligand>
        <name>FMN</name>
        <dbReference type="ChEBI" id="CHEBI:58210"/>
    </ligand>
</feature>
<name>AZOR2_PSEF5</name>
<dbReference type="EC" id="1.6.5.-" evidence="1"/>
<dbReference type="EC" id="1.7.1.17" evidence="1"/>
<dbReference type="EMBL" id="CP000076">
    <property type="protein sequence ID" value="AAY90829.1"/>
    <property type="molecule type" value="Genomic_DNA"/>
</dbReference>
<dbReference type="RefSeq" id="WP_011059884.1">
    <property type="nucleotide sequence ID" value="NC_004129.6"/>
</dbReference>
<dbReference type="SMR" id="Q4KGG0"/>
<dbReference type="STRING" id="220664.PFL_1546"/>
<dbReference type="KEGG" id="pfl:PFL_1546"/>
<dbReference type="PATRIC" id="fig|220664.5.peg.1582"/>
<dbReference type="eggNOG" id="COG1182">
    <property type="taxonomic scope" value="Bacteria"/>
</dbReference>
<dbReference type="HOGENOM" id="CLU_088964_0_0_6"/>
<dbReference type="Proteomes" id="UP000008540">
    <property type="component" value="Chromosome"/>
</dbReference>
<dbReference type="GO" id="GO:0009055">
    <property type="term" value="F:electron transfer activity"/>
    <property type="evidence" value="ECO:0007669"/>
    <property type="project" value="UniProtKB-UniRule"/>
</dbReference>
<dbReference type="GO" id="GO:0010181">
    <property type="term" value="F:FMN binding"/>
    <property type="evidence" value="ECO:0007669"/>
    <property type="project" value="UniProtKB-UniRule"/>
</dbReference>
<dbReference type="GO" id="GO:0016652">
    <property type="term" value="F:oxidoreductase activity, acting on NAD(P)H as acceptor"/>
    <property type="evidence" value="ECO:0007669"/>
    <property type="project" value="UniProtKB-UniRule"/>
</dbReference>
<dbReference type="GO" id="GO:0016655">
    <property type="term" value="F:oxidoreductase activity, acting on NAD(P)H, quinone or similar compound as acceptor"/>
    <property type="evidence" value="ECO:0007669"/>
    <property type="project" value="InterPro"/>
</dbReference>
<dbReference type="Gene3D" id="3.40.50.360">
    <property type="match status" value="1"/>
</dbReference>
<dbReference type="HAMAP" id="MF_01216">
    <property type="entry name" value="Azoreductase_type1"/>
    <property type="match status" value="1"/>
</dbReference>
<dbReference type="InterPro" id="IPR003680">
    <property type="entry name" value="Flavodoxin_fold"/>
</dbReference>
<dbReference type="InterPro" id="IPR029039">
    <property type="entry name" value="Flavoprotein-like_sf"/>
</dbReference>
<dbReference type="InterPro" id="IPR050104">
    <property type="entry name" value="FMN-dep_NADH:Q_OxRdtase_AzoR1"/>
</dbReference>
<dbReference type="InterPro" id="IPR023048">
    <property type="entry name" value="NADH:quinone_OxRdtase_FMN_depd"/>
</dbReference>
<dbReference type="PANTHER" id="PTHR43741">
    <property type="entry name" value="FMN-DEPENDENT NADH-AZOREDUCTASE 1"/>
    <property type="match status" value="1"/>
</dbReference>
<dbReference type="PANTHER" id="PTHR43741:SF2">
    <property type="entry name" value="FMN-DEPENDENT NADH:QUINONE OXIDOREDUCTASE"/>
    <property type="match status" value="1"/>
</dbReference>
<dbReference type="Pfam" id="PF02525">
    <property type="entry name" value="Flavodoxin_2"/>
    <property type="match status" value="1"/>
</dbReference>
<dbReference type="SUPFAM" id="SSF52218">
    <property type="entry name" value="Flavoproteins"/>
    <property type="match status" value="1"/>
</dbReference>